<name>RS7_CUTAK</name>
<protein>
    <recommendedName>
        <fullName evidence="1">Small ribosomal subunit protein uS7</fullName>
    </recommendedName>
    <alternativeName>
        <fullName evidence="2">30S ribosomal protein S7</fullName>
    </alternativeName>
</protein>
<reference key="1">
    <citation type="journal article" date="2004" name="Science">
        <title>The complete genome sequence of Propionibacterium acnes, a commensal of human skin.</title>
        <authorList>
            <person name="Brueggemann H."/>
            <person name="Henne A."/>
            <person name="Hoster F."/>
            <person name="Liesegang H."/>
            <person name="Wiezer A."/>
            <person name="Strittmatter A."/>
            <person name="Hujer S."/>
            <person name="Duerre P."/>
            <person name="Gottschalk G."/>
        </authorList>
    </citation>
    <scope>NUCLEOTIDE SEQUENCE [LARGE SCALE GENOMIC DNA]</scope>
    <source>
        <strain>DSM 16379 / KPA171202</strain>
    </source>
</reference>
<accession>Q6A6L4</accession>
<dbReference type="EMBL" id="AE017283">
    <property type="protein sequence ID" value="AAT83599.1"/>
    <property type="molecule type" value="Genomic_DNA"/>
</dbReference>
<dbReference type="RefSeq" id="WP_002514883.1">
    <property type="nucleotide sequence ID" value="NZ_CP025935.1"/>
</dbReference>
<dbReference type="PDB" id="8CRX">
    <property type="method" value="EM"/>
    <property type="resolution" value="2.78 A"/>
    <property type="chains" value="I=1-156"/>
</dbReference>
<dbReference type="PDB" id="8CVO">
    <property type="method" value="EM"/>
    <property type="resolution" value="2.95 A"/>
    <property type="chains" value="I=1-156"/>
</dbReference>
<dbReference type="PDBsum" id="8CRX"/>
<dbReference type="PDBsum" id="8CVO"/>
<dbReference type="SMR" id="Q6A6L4"/>
<dbReference type="EnsemblBacteria" id="AAT83599">
    <property type="protein sequence ID" value="AAT83599"/>
    <property type="gene ID" value="PPA1876"/>
</dbReference>
<dbReference type="GeneID" id="92857822"/>
<dbReference type="KEGG" id="pac:PPA1876"/>
<dbReference type="eggNOG" id="COG0049">
    <property type="taxonomic scope" value="Bacteria"/>
</dbReference>
<dbReference type="HOGENOM" id="CLU_072226_1_1_11"/>
<dbReference type="Proteomes" id="UP000000603">
    <property type="component" value="Chromosome"/>
</dbReference>
<dbReference type="GO" id="GO:0015935">
    <property type="term" value="C:small ribosomal subunit"/>
    <property type="evidence" value="ECO:0007669"/>
    <property type="project" value="InterPro"/>
</dbReference>
<dbReference type="GO" id="GO:0019843">
    <property type="term" value="F:rRNA binding"/>
    <property type="evidence" value="ECO:0007669"/>
    <property type="project" value="UniProtKB-UniRule"/>
</dbReference>
<dbReference type="GO" id="GO:0003735">
    <property type="term" value="F:structural constituent of ribosome"/>
    <property type="evidence" value="ECO:0007669"/>
    <property type="project" value="InterPro"/>
</dbReference>
<dbReference type="GO" id="GO:0000049">
    <property type="term" value="F:tRNA binding"/>
    <property type="evidence" value="ECO:0007669"/>
    <property type="project" value="UniProtKB-UniRule"/>
</dbReference>
<dbReference type="GO" id="GO:0006412">
    <property type="term" value="P:translation"/>
    <property type="evidence" value="ECO:0007669"/>
    <property type="project" value="UniProtKB-UniRule"/>
</dbReference>
<dbReference type="CDD" id="cd14869">
    <property type="entry name" value="uS7_Bacteria"/>
    <property type="match status" value="1"/>
</dbReference>
<dbReference type="FunFam" id="1.10.455.10:FF:000001">
    <property type="entry name" value="30S ribosomal protein S7"/>
    <property type="match status" value="1"/>
</dbReference>
<dbReference type="Gene3D" id="1.10.455.10">
    <property type="entry name" value="Ribosomal protein S7 domain"/>
    <property type="match status" value="1"/>
</dbReference>
<dbReference type="HAMAP" id="MF_00480_B">
    <property type="entry name" value="Ribosomal_uS7_B"/>
    <property type="match status" value="1"/>
</dbReference>
<dbReference type="InterPro" id="IPR000235">
    <property type="entry name" value="Ribosomal_uS7"/>
</dbReference>
<dbReference type="InterPro" id="IPR005717">
    <property type="entry name" value="Ribosomal_uS7_bac/org-type"/>
</dbReference>
<dbReference type="InterPro" id="IPR020606">
    <property type="entry name" value="Ribosomal_uS7_CS"/>
</dbReference>
<dbReference type="InterPro" id="IPR023798">
    <property type="entry name" value="Ribosomal_uS7_dom"/>
</dbReference>
<dbReference type="InterPro" id="IPR036823">
    <property type="entry name" value="Ribosomal_uS7_dom_sf"/>
</dbReference>
<dbReference type="NCBIfam" id="TIGR01029">
    <property type="entry name" value="rpsG_bact"/>
    <property type="match status" value="1"/>
</dbReference>
<dbReference type="PANTHER" id="PTHR11205">
    <property type="entry name" value="RIBOSOMAL PROTEIN S7"/>
    <property type="match status" value="1"/>
</dbReference>
<dbReference type="Pfam" id="PF00177">
    <property type="entry name" value="Ribosomal_S7"/>
    <property type="match status" value="1"/>
</dbReference>
<dbReference type="PIRSF" id="PIRSF002122">
    <property type="entry name" value="RPS7p_RPS7a_RPS5e_RPS7o"/>
    <property type="match status" value="1"/>
</dbReference>
<dbReference type="SUPFAM" id="SSF47973">
    <property type="entry name" value="Ribosomal protein S7"/>
    <property type="match status" value="1"/>
</dbReference>
<dbReference type="PROSITE" id="PS00052">
    <property type="entry name" value="RIBOSOMAL_S7"/>
    <property type="match status" value="1"/>
</dbReference>
<sequence length="156" mass="17584">MPRKGPAPKRPVMVDPVYGSPLVSQLVSKILLDGKKTVAQNIVYTALEGCRAKNNTDPVQTLKRALDNIKPSLEVKSRRVGGATYQVPVEVKPARQTTLAMRWLVNFSRERREKTMAERLMNEILDASNGLGASVKRREDTHKMAEANRAFAHYRW</sequence>
<feature type="chain" id="PRO_0000124318" description="Small ribosomal subunit protein uS7">
    <location>
        <begin position="1"/>
        <end position="156"/>
    </location>
</feature>
<feature type="turn" evidence="3">
    <location>
        <begin position="16"/>
        <end position="18"/>
    </location>
</feature>
<feature type="helix" evidence="3">
    <location>
        <begin position="21"/>
        <end position="30"/>
    </location>
</feature>
<feature type="helix" evidence="3">
    <location>
        <begin position="32"/>
        <end position="34"/>
    </location>
</feature>
<feature type="helix" evidence="3">
    <location>
        <begin position="36"/>
        <end position="53"/>
    </location>
</feature>
<feature type="strand" evidence="3">
    <location>
        <begin position="54"/>
        <end position="56"/>
    </location>
</feature>
<feature type="helix" evidence="3">
    <location>
        <begin position="58"/>
        <end position="69"/>
    </location>
</feature>
<feature type="strand" evidence="3">
    <location>
        <begin position="72"/>
        <end position="78"/>
    </location>
</feature>
<feature type="strand" evidence="3">
    <location>
        <begin position="85"/>
        <end position="90"/>
    </location>
</feature>
<feature type="helix" evidence="3">
    <location>
        <begin position="93"/>
        <end position="110"/>
    </location>
</feature>
<feature type="strand" evidence="3">
    <location>
        <begin position="111"/>
        <end position="114"/>
    </location>
</feature>
<feature type="helix" evidence="3">
    <location>
        <begin position="116"/>
        <end position="129"/>
    </location>
</feature>
<feature type="helix" evidence="3">
    <location>
        <begin position="133"/>
        <end position="147"/>
    </location>
</feature>
<feature type="helix" evidence="3">
    <location>
        <begin position="149"/>
        <end position="154"/>
    </location>
</feature>
<organism>
    <name type="scientific">Cutibacterium acnes (strain DSM 16379 / KPA171202)</name>
    <name type="common">Propionibacterium acnes</name>
    <dbReference type="NCBI Taxonomy" id="267747"/>
    <lineage>
        <taxon>Bacteria</taxon>
        <taxon>Bacillati</taxon>
        <taxon>Actinomycetota</taxon>
        <taxon>Actinomycetes</taxon>
        <taxon>Propionibacteriales</taxon>
        <taxon>Propionibacteriaceae</taxon>
        <taxon>Cutibacterium</taxon>
    </lineage>
</organism>
<evidence type="ECO:0000255" key="1">
    <source>
        <dbReference type="HAMAP-Rule" id="MF_00480"/>
    </source>
</evidence>
<evidence type="ECO:0000305" key="2"/>
<evidence type="ECO:0007829" key="3">
    <source>
        <dbReference type="PDB" id="8CVO"/>
    </source>
</evidence>
<proteinExistence type="evidence at protein level"/>
<gene>
    <name evidence="1" type="primary">rpsG</name>
    <name type="ordered locus">PPA1876</name>
</gene>
<comment type="function">
    <text evidence="1">One of the primary rRNA binding proteins, it binds directly to 16S rRNA where it nucleates assembly of the head domain of the 30S subunit. Is located at the subunit interface close to the decoding center, probably blocks exit of the E-site tRNA.</text>
</comment>
<comment type="subunit">
    <text evidence="1">Part of the 30S ribosomal subunit. Contacts proteins S9 and S11.</text>
</comment>
<comment type="similarity">
    <text evidence="1">Belongs to the universal ribosomal protein uS7 family.</text>
</comment>
<keyword id="KW-0002">3D-structure</keyword>
<keyword id="KW-0687">Ribonucleoprotein</keyword>
<keyword id="KW-0689">Ribosomal protein</keyword>
<keyword id="KW-0694">RNA-binding</keyword>
<keyword id="KW-0699">rRNA-binding</keyword>
<keyword id="KW-0820">tRNA-binding</keyword>